<keyword id="KW-0903">Direct protein sequencing</keyword>
<organism>
    <name type="scientific">Streptococcus pyogenes serotype M6 (strain ATCC BAA-946 / MGAS10394)</name>
    <dbReference type="NCBI Taxonomy" id="286636"/>
    <lineage>
        <taxon>Bacteria</taxon>
        <taxon>Bacillati</taxon>
        <taxon>Bacillota</taxon>
        <taxon>Bacilli</taxon>
        <taxon>Lactobacillales</taxon>
        <taxon>Streptococcaceae</taxon>
        <taxon>Streptococcus</taxon>
    </lineage>
</organism>
<reference key="1">
    <citation type="journal article" date="2004" name="J. Infect. Dis.">
        <title>Progress toward characterization of the group A Streptococcus metagenome: complete genome sequence of a macrolide-resistant serotype M6 strain.</title>
        <authorList>
            <person name="Banks D.J."/>
            <person name="Porcella S.F."/>
            <person name="Barbian K.D."/>
            <person name="Beres S.B."/>
            <person name="Philips L.E."/>
            <person name="Voyich J.M."/>
            <person name="DeLeo F.R."/>
            <person name="Martin J.M."/>
            <person name="Somerville G.A."/>
            <person name="Musser J.M."/>
        </authorList>
    </citation>
    <scope>NUCLEOTIDE SEQUENCE [LARGE SCALE GENOMIC DNA]</scope>
    <source>
        <strain>ATCC BAA-946 / MGAS10394</strain>
    </source>
</reference>
<reference key="2">
    <citation type="submission" date="2000-05" db="UniProtKB">
        <title>Two-dimensional gel electrophoresis map of Streptococcus pyogenes proteins.</title>
        <authorList>
            <person name="Hogan D.A."/>
            <person name="Du P."/>
            <person name="Stevenson T.I."/>
            <person name="Whitton M."/>
            <person name="Kilby G.W."/>
            <person name="Rogers J."/>
            <person name="VanBogelen R.A."/>
        </authorList>
    </citation>
    <scope>PROTEIN SEQUENCE OF 10-18; 35-56 AND 70-89</scope>
    <scope>MASS SPECTROMETRY</scope>
    <source>
        <strain>JRS4 / Serotype M6</strain>
    </source>
</reference>
<comment type="mass spectrometry"/>
<comment type="similarity">
    <text evidence="2">Belongs to the UPF0297 family.</text>
</comment>
<gene>
    <name type="ordered locus">M6_Spy1796</name>
</gene>
<evidence type="ECO:0000269" key="1">
    <source ref="2"/>
</evidence>
<evidence type="ECO:0000305" key="2"/>
<sequence>MGFTDETVRFKLDDGDKRQISETLTAVYHSLDEKGYNPINQIVGYVLSGDPAYVPRYNDARNQIRKYERDEIVEELVRYYLQGNGIDVK</sequence>
<accession>Q5X9I2</accession>
<accession>P82591</accession>
<accession>Q99XP3</accession>
<proteinExistence type="evidence at protein level"/>
<dbReference type="EMBL" id="CP000003">
    <property type="protein sequence ID" value="AAT87931.1"/>
    <property type="molecule type" value="Genomic_DNA"/>
</dbReference>
<dbReference type="RefSeq" id="WP_002982194.1">
    <property type="nucleotide sequence ID" value="NC_006086.1"/>
</dbReference>
<dbReference type="SMR" id="Q5X9I2"/>
<dbReference type="KEGG" id="spa:M6_Spy1796"/>
<dbReference type="HOGENOM" id="CLU_162466_0_0_9"/>
<dbReference type="Proteomes" id="UP000001167">
    <property type="component" value="Chromosome"/>
</dbReference>
<dbReference type="HAMAP" id="MF_01507">
    <property type="entry name" value="UPF0297"/>
    <property type="match status" value="1"/>
</dbReference>
<dbReference type="InterPro" id="IPR009309">
    <property type="entry name" value="IreB"/>
</dbReference>
<dbReference type="NCBIfam" id="NF003997">
    <property type="entry name" value="PRK05473.1"/>
    <property type="match status" value="1"/>
</dbReference>
<dbReference type="PANTHER" id="PTHR40067">
    <property type="entry name" value="UPF0297 PROTEIN YRZL"/>
    <property type="match status" value="1"/>
</dbReference>
<dbReference type="PANTHER" id="PTHR40067:SF1">
    <property type="entry name" value="UPF0297 PROTEIN YRZL"/>
    <property type="match status" value="1"/>
</dbReference>
<dbReference type="Pfam" id="PF06135">
    <property type="entry name" value="IreB"/>
    <property type="match status" value="1"/>
</dbReference>
<dbReference type="PIRSF" id="PIRSF037258">
    <property type="entry name" value="DUF965_bac"/>
    <property type="match status" value="1"/>
</dbReference>
<name>Y1796_STRP6</name>
<feature type="chain" id="PRO_0000216996" description="UPF0297 protein M6_Spy1796">
    <location>
        <begin position="1"/>
        <end position="89"/>
    </location>
</feature>
<protein>
    <recommendedName>
        <fullName>UPF0297 protein M6_Spy1796</fullName>
    </recommendedName>
</protein>